<protein>
    <recommendedName>
        <fullName>Uncharacterized protein H233R</fullName>
        <shortName>pH233R</shortName>
    </recommendedName>
</protein>
<name>VF233_ASFK5</name>
<accession>P0CAA4</accession>
<feature type="chain" id="PRO_0000373595" description="Uncharacterized protein H233R">
    <location>
        <begin position="1"/>
        <end position="233"/>
    </location>
</feature>
<comment type="induction">
    <text evidence="1">Expressed in the late phase of the viral replicative cycle.</text>
</comment>
<comment type="similarity">
    <text evidence="1">Belongs to the asfivirus H233R family.</text>
</comment>
<proteinExistence type="inferred from homology"/>
<dbReference type="EMBL" id="AY261360">
    <property type="status" value="NOT_ANNOTATED_CDS"/>
    <property type="molecule type" value="Genomic_DNA"/>
</dbReference>
<dbReference type="Proteomes" id="UP000000861">
    <property type="component" value="Segment"/>
</dbReference>
<keyword id="KW-0426">Late protein</keyword>
<evidence type="ECO:0000305" key="1"/>
<organismHost>
    <name type="scientific">Ornithodoros</name>
    <name type="common">relapsing fever ticks</name>
    <dbReference type="NCBI Taxonomy" id="6937"/>
</organismHost>
<organismHost>
    <name type="scientific">Phacochoerus aethiopicus</name>
    <name type="common">Warthog</name>
    <dbReference type="NCBI Taxonomy" id="85517"/>
</organismHost>
<organismHost>
    <name type="scientific">Phacochoerus africanus</name>
    <name type="common">Warthog</name>
    <dbReference type="NCBI Taxonomy" id="41426"/>
</organismHost>
<organismHost>
    <name type="scientific">Potamochoerus larvatus</name>
    <name type="common">Bushpig</name>
    <dbReference type="NCBI Taxonomy" id="273792"/>
</organismHost>
<organismHost>
    <name type="scientific">Sus scrofa</name>
    <name type="common">Pig</name>
    <dbReference type="NCBI Taxonomy" id="9823"/>
</organismHost>
<sequence length="233" mass="25864">MILIASPFSLAHLEYLNTWHAHIKNIAQQHGLDIKVAIVISNTHLNNFLPVSTPLNIECITFPGCGIKEIDLLWARIKLFQHYCAIGARLLWLVSADIRPSVSTWPAIADSLKKGADAVVVPYPSRWNNLIPTVIKEIVVRQKKCLVAVDAHHLDTDTQIVGAGMGCIVLTLKALMVRLSIGKQPIKILWPDLHGTAEGIPLEGVEVGWFLNAYAHKLNIRCLGRDYIAQHLN</sequence>
<organism>
    <name type="scientific">African swine fever virus (isolate Pig/Kenya/KEN-50/1950)</name>
    <name type="common">ASFV</name>
    <dbReference type="NCBI Taxonomy" id="561445"/>
    <lineage>
        <taxon>Viruses</taxon>
        <taxon>Varidnaviria</taxon>
        <taxon>Bamfordvirae</taxon>
        <taxon>Nucleocytoviricota</taxon>
        <taxon>Pokkesviricetes</taxon>
        <taxon>Asfuvirales</taxon>
        <taxon>Asfarviridae</taxon>
        <taxon>Asfivirus</taxon>
        <taxon>African swine fever virus</taxon>
    </lineage>
</organism>
<reference key="1">
    <citation type="submission" date="2003-03" db="EMBL/GenBank/DDBJ databases">
        <title>African swine fever virus genomes.</title>
        <authorList>
            <person name="Kutish G.F."/>
            <person name="Rock D.L."/>
        </authorList>
    </citation>
    <scope>NUCLEOTIDE SEQUENCE [LARGE SCALE GENOMIC DNA]</scope>
</reference>
<gene>
    <name type="ordered locus">Ken-130</name>
</gene>